<name>NACB_YARLI</name>
<dbReference type="EMBL" id="CR382132">
    <property type="protein sequence ID" value="CAG77966.1"/>
    <property type="molecule type" value="Genomic_DNA"/>
</dbReference>
<dbReference type="RefSeq" id="XP_505159.1">
    <property type="nucleotide sequence ID" value="XM_505159.1"/>
</dbReference>
<dbReference type="SMR" id="Q6C2F3"/>
<dbReference type="FunCoup" id="Q6C2F3">
    <property type="interactions" value="1269"/>
</dbReference>
<dbReference type="STRING" id="284591.Q6C2F3"/>
<dbReference type="EnsemblFungi" id="CAG77966">
    <property type="protein sequence ID" value="CAG77966"/>
    <property type="gene ID" value="YALI0_F08393g"/>
</dbReference>
<dbReference type="KEGG" id="yli:2908499"/>
<dbReference type="VEuPathDB" id="FungiDB:YALI0_F08393g"/>
<dbReference type="HOGENOM" id="CLU_098726_2_0_1"/>
<dbReference type="InParanoid" id="Q6C2F3"/>
<dbReference type="OMA" id="RMQQSVR"/>
<dbReference type="OrthoDB" id="122099at4891"/>
<dbReference type="Proteomes" id="UP000001300">
    <property type="component" value="Chromosome F"/>
</dbReference>
<dbReference type="GO" id="GO:0005829">
    <property type="term" value="C:cytosol"/>
    <property type="evidence" value="ECO:0000318"/>
    <property type="project" value="GO_Central"/>
</dbReference>
<dbReference type="GO" id="GO:0005854">
    <property type="term" value="C:nascent polypeptide-associated complex"/>
    <property type="evidence" value="ECO:0000318"/>
    <property type="project" value="GO_Central"/>
</dbReference>
<dbReference type="GO" id="GO:0005634">
    <property type="term" value="C:nucleus"/>
    <property type="evidence" value="ECO:0007669"/>
    <property type="project" value="UniProtKB-SubCell"/>
</dbReference>
<dbReference type="GO" id="GO:0015031">
    <property type="term" value="P:protein transport"/>
    <property type="evidence" value="ECO:0007669"/>
    <property type="project" value="UniProtKB-KW"/>
</dbReference>
<dbReference type="CDD" id="cd22055">
    <property type="entry name" value="NAC_BTF3"/>
    <property type="match status" value="1"/>
</dbReference>
<dbReference type="FunFam" id="2.20.70.30:FF:000001">
    <property type="entry name" value="Transcription factor BTF3 homolog"/>
    <property type="match status" value="1"/>
</dbReference>
<dbReference type="Gene3D" id="2.20.70.30">
    <property type="entry name" value="Nascent polypeptide-associated complex domain"/>
    <property type="match status" value="1"/>
</dbReference>
<dbReference type="InterPro" id="IPR039370">
    <property type="entry name" value="BTF3"/>
</dbReference>
<dbReference type="InterPro" id="IPR038187">
    <property type="entry name" value="NAC_A/B_dom_sf"/>
</dbReference>
<dbReference type="InterPro" id="IPR002715">
    <property type="entry name" value="Nas_poly-pep-assoc_cplx_dom"/>
</dbReference>
<dbReference type="PANTHER" id="PTHR10351">
    <property type="entry name" value="TRANSCRIPTION FACTOR BTF3 FAMILY MEMBER"/>
    <property type="match status" value="1"/>
</dbReference>
<dbReference type="Pfam" id="PF01849">
    <property type="entry name" value="NAC"/>
    <property type="match status" value="1"/>
</dbReference>
<dbReference type="SMART" id="SM01407">
    <property type="entry name" value="NAC"/>
    <property type="match status" value="1"/>
</dbReference>
<dbReference type="PROSITE" id="PS51151">
    <property type="entry name" value="NAC_AB"/>
    <property type="match status" value="1"/>
</dbReference>
<gene>
    <name type="primary">EGD1</name>
    <name type="ordered locus">YALI0F08393g</name>
</gene>
<protein>
    <recommendedName>
        <fullName>Nascent polypeptide-associated complex subunit beta</fullName>
        <shortName>NAC-beta</shortName>
    </recommendedName>
    <alternativeName>
        <fullName>Beta-NAC</fullName>
    </alternativeName>
</protein>
<sequence length="162" mass="17292">MPVDPAKLAALQKKSGAQSGGKGTPRRPGKKVAGRNISEDEKKLSATLKKFNAQEITGISEVNMFKEDGTVLHFPKVHVEGSVASNTFAISGPSQQKDIAELIPDILPQMGQDALLQLQQAAVQFSKLQEQAKKTAGGPDAAKEAGDDEIPNLVENFEDNVE</sequence>
<accession>Q6C2F3</accession>
<proteinExistence type="inferred from homology"/>
<comment type="function">
    <text evidence="1">Component of the nascent polypeptide-associated complex (NAC), a dynamic component of the ribosomal exit tunnel, protecting the emerging polypeptides from interaction with other cytoplasmic proteins to ensure appropriate nascent protein targeting. The NAC complex also promotes mitochondrial protein import by enhancing productive ribosome interactions with the outer mitochondrial membrane and blocks the inappropriate interaction of ribosomes translating non-secretory nascent polypeptides with translocation sites in the membrane of the endoplasmic reticulum. EGD1 may act as a transcription factor that exert a negative effect on the expression of several genes that are transcribed by RNA polymerase II.</text>
</comment>
<comment type="subunit">
    <text evidence="1">Part of the nascent polypeptide-associated complex (NAC), consisting of EGD2 and EGD1. NAC associates with ribosomes via EGD1 (By similarity).</text>
</comment>
<comment type="subcellular location">
    <subcellularLocation>
        <location evidence="1">Cytoplasm</location>
    </subcellularLocation>
    <subcellularLocation>
        <location evidence="1">Nucleus</location>
    </subcellularLocation>
    <text evidence="1">Predominantly cytoplasmic, may also transiently localize to the nucleus.</text>
</comment>
<comment type="similarity">
    <text evidence="4">Belongs to the NAC-beta family.</text>
</comment>
<organism>
    <name type="scientific">Yarrowia lipolytica (strain CLIB 122 / E 150)</name>
    <name type="common">Yeast</name>
    <name type="synonym">Candida lipolytica</name>
    <dbReference type="NCBI Taxonomy" id="284591"/>
    <lineage>
        <taxon>Eukaryota</taxon>
        <taxon>Fungi</taxon>
        <taxon>Dikarya</taxon>
        <taxon>Ascomycota</taxon>
        <taxon>Saccharomycotina</taxon>
        <taxon>Dipodascomycetes</taxon>
        <taxon>Dipodascales</taxon>
        <taxon>Dipodascales incertae sedis</taxon>
        <taxon>Yarrowia</taxon>
    </lineage>
</organism>
<reference key="1">
    <citation type="journal article" date="2004" name="Nature">
        <title>Genome evolution in yeasts.</title>
        <authorList>
            <person name="Dujon B."/>
            <person name="Sherman D."/>
            <person name="Fischer G."/>
            <person name="Durrens P."/>
            <person name="Casaregola S."/>
            <person name="Lafontaine I."/>
            <person name="de Montigny J."/>
            <person name="Marck C."/>
            <person name="Neuveglise C."/>
            <person name="Talla E."/>
            <person name="Goffard N."/>
            <person name="Frangeul L."/>
            <person name="Aigle M."/>
            <person name="Anthouard V."/>
            <person name="Babour A."/>
            <person name="Barbe V."/>
            <person name="Barnay S."/>
            <person name="Blanchin S."/>
            <person name="Beckerich J.-M."/>
            <person name="Beyne E."/>
            <person name="Bleykasten C."/>
            <person name="Boisrame A."/>
            <person name="Boyer J."/>
            <person name="Cattolico L."/>
            <person name="Confanioleri F."/>
            <person name="de Daruvar A."/>
            <person name="Despons L."/>
            <person name="Fabre E."/>
            <person name="Fairhead C."/>
            <person name="Ferry-Dumazet H."/>
            <person name="Groppi A."/>
            <person name="Hantraye F."/>
            <person name="Hennequin C."/>
            <person name="Jauniaux N."/>
            <person name="Joyet P."/>
            <person name="Kachouri R."/>
            <person name="Kerrest A."/>
            <person name="Koszul R."/>
            <person name="Lemaire M."/>
            <person name="Lesur I."/>
            <person name="Ma L."/>
            <person name="Muller H."/>
            <person name="Nicaud J.-M."/>
            <person name="Nikolski M."/>
            <person name="Oztas S."/>
            <person name="Ozier-Kalogeropoulos O."/>
            <person name="Pellenz S."/>
            <person name="Potier S."/>
            <person name="Richard G.-F."/>
            <person name="Straub M.-L."/>
            <person name="Suleau A."/>
            <person name="Swennen D."/>
            <person name="Tekaia F."/>
            <person name="Wesolowski-Louvel M."/>
            <person name="Westhof E."/>
            <person name="Wirth B."/>
            <person name="Zeniou-Meyer M."/>
            <person name="Zivanovic Y."/>
            <person name="Bolotin-Fukuhara M."/>
            <person name="Thierry A."/>
            <person name="Bouchier C."/>
            <person name="Caudron B."/>
            <person name="Scarpelli C."/>
            <person name="Gaillardin C."/>
            <person name="Weissenbach J."/>
            <person name="Wincker P."/>
            <person name="Souciet J.-L."/>
        </authorList>
    </citation>
    <scope>NUCLEOTIDE SEQUENCE [LARGE SCALE GENOMIC DNA]</scope>
    <source>
        <strain>CLIB 122 / E 150</strain>
    </source>
</reference>
<evidence type="ECO:0000250" key="1"/>
<evidence type="ECO:0000255" key="2">
    <source>
        <dbReference type="PROSITE-ProRule" id="PRU00507"/>
    </source>
</evidence>
<evidence type="ECO:0000256" key="3">
    <source>
        <dbReference type="SAM" id="MobiDB-lite"/>
    </source>
</evidence>
<evidence type="ECO:0000305" key="4"/>
<keyword id="KW-0963">Cytoplasm</keyword>
<keyword id="KW-0539">Nucleus</keyword>
<keyword id="KW-0653">Protein transport</keyword>
<keyword id="KW-1185">Reference proteome</keyword>
<keyword id="KW-0678">Repressor</keyword>
<keyword id="KW-0804">Transcription</keyword>
<keyword id="KW-0805">Transcription regulation</keyword>
<keyword id="KW-0813">Transport</keyword>
<feature type="chain" id="PRO_0000273516" description="Nascent polypeptide-associated complex subunit beta">
    <location>
        <begin position="1"/>
        <end position="162"/>
    </location>
</feature>
<feature type="domain" description="NAC-A/B" evidence="2">
    <location>
        <begin position="38"/>
        <end position="103"/>
    </location>
</feature>
<feature type="region of interest" description="Disordered" evidence="3">
    <location>
        <begin position="1"/>
        <end position="39"/>
    </location>
</feature>
<feature type="region of interest" description="Disordered" evidence="3">
    <location>
        <begin position="130"/>
        <end position="162"/>
    </location>
</feature>
<feature type="compositionally biased region" description="Basic residues" evidence="3">
    <location>
        <begin position="24"/>
        <end position="33"/>
    </location>
</feature>
<feature type="compositionally biased region" description="Acidic residues" evidence="3">
    <location>
        <begin position="146"/>
        <end position="162"/>
    </location>
</feature>